<gene>
    <name evidence="1" type="primary">rpsJ</name>
    <name type="ordered locus">PHZ_c1229</name>
</gene>
<proteinExistence type="inferred from homology"/>
<reference key="1">
    <citation type="journal article" date="2008" name="BMC Genomics">
        <title>Complete genome of Phenylobacterium zucineum - a novel facultative intracellular bacterium isolated from human erythroleukemia cell line K562.</title>
        <authorList>
            <person name="Luo Y."/>
            <person name="Xu X."/>
            <person name="Ding Z."/>
            <person name="Liu Z."/>
            <person name="Zhang B."/>
            <person name="Yan Z."/>
            <person name="Sun J."/>
            <person name="Hu S."/>
            <person name="Hu X."/>
        </authorList>
    </citation>
    <scope>NUCLEOTIDE SEQUENCE [LARGE SCALE GENOMIC DNA]</scope>
    <source>
        <strain>HLK1</strain>
    </source>
</reference>
<evidence type="ECO:0000255" key="1">
    <source>
        <dbReference type="HAMAP-Rule" id="MF_00508"/>
    </source>
</evidence>
<evidence type="ECO:0000305" key="2"/>
<accession>B4R8L6</accession>
<dbReference type="EMBL" id="CP000747">
    <property type="protein sequence ID" value="ACG77643.1"/>
    <property type="molecule type" value="Genomic_DNA"/>
</dbReference>
<dbReference type="RefSeq" id="WP_012521787.1">
    <property type="nucleotide sequence ID" value="NC_011144.1"/>
</dbReference>
<dbReference type="SMR" id="B4R8L6"/>
<dbReference type="STRING" id="450851.PHZ_c1229"/>
<dbReference type="KEGG" id="pzu:PHZ_c1229"/>
<dbReference type="eggNOG" id="COG0051">
    <property type="taxonomic scope" value="Bacteria"/>
</dbReference>
<dbReference type="HOGENOM" id="CLU_122625_1_3_5"/>
<dbReference type="OrthoDB" id="9804464at2"/>
<dbReference type="Proteomes" id="UP000001868">
    <property type="component" value="Chromosome"/>
</dbReference>
<dbReference type="GO" id="GO:1990904">
    <property type="term" value="C:ribonucleoprotein complex"/>
    <property type="evidence" value="ECO:0007669"/>
    <property type="project" value="UniProtKB-KW"/>
</dbReference>
<dbReference type="GO" id="GO:0005840">
    <property type="term" value="C:ribosome"/>
    <property type="evidence" value="ECO:0007669"/>
    <property type="project" value="UniProtKB-KW"/>
</dbReference>
<dbReference type="GO" id="GO:0003735">
    <property type="term" value="F:structural constituent of ribosome"/>
    <property type="evidence" value="ECO:0007669"/>
    <property type="project" value="InterPro"/>
</dbReference>
<dbReference type="GO" id="GO:0000049">
    <property type="term" value="F:tRNA binding"/>
    <property type="evidence" value="ECO:0007669"/>
    <property type="project" value="UniProtKB-UniRule"/>
</dbReference>
<dbReference type="GO" id="GO:0006412">
    <property type="term" value="P:translation"/>
    <property type="evidence" value="ECO:0007669"/>
    <property type="project" value="UniProtKB-UniRule"/>
</dbReference>
<dbReference type="FunFam" id="3.30.70.600:FF:000001">
    <property type="entry name" value="30S ribosomal protein S10"/>
    <property type="match status" value="1"/>
</dbReference>
<dbReference type="Gene3D" id="3.30.70.600">
    <property type="entry name" value="Ribosomal protein S10 domain"/>
    <property type="match status" value="1"/>
</dbReference>
<dbReference type="HAMAP" id="MF_00508">
    <property type="entry name" value="Ribosomal_uS10"/>
    <property type="match status" value="1"/>
</dbReference>
<dbReference type="InterPro" id="IPR001848">
    <property type="entry name" value="Ribosomal_uS10"/>
</dbReference>
<dbReference type="InterPro" id="IPR018268">
    <property type="entry name" value="Ribosomal_uS10_CS"/>
</dbReference>
<dbReference type="InterPro" id="IPR027486">
    <property type="entry name" value="Ribosomal_uS10_dom"/>
</dbReference>
<dbReference type="InterPro" id="IPR036838">
    <property type="entry name" value="Ribosomal_uS10_dom_sf"/>
</dbReference>
<dbReference type="NCBIfam" id="NF001861">
    <property type="entry name" value="PRK00596.1"/>
    <property type="match status" value="1"/>
</dbReference>
<dbReference type="NCBIfam" id="TIGR01049">
    <property type="entry name" value="rpsJ_bact"/>
    <property type="match status" value="1"/>
</dbReference>
<dbReference type="PANTHER" id="PTHR11700">
    <property type="entry name" value="30S RIBOSOMAL PROTEIN S10 FAMILY MEMBER"/>
    <property type="match status" value="1"/>
</dbReference>
<dbReference type="Pfam" id="PF00338">
    <property type="entry name" value="Ribosomal_S10"/>
    <property type="match status" value="1"/>
</dbReference>
<dbReference type="PRINTS" id="PR00971">
    <property type="entry name" value="RIBOSOMALS10"/>
</dbReference>
<dbReference type="SMART" id="SM01403">
    <property type="entry name" value="Ribosomal_S10"/>
    <property type="match status" value="1"/>
</dbReference>
<dbReference type="SUPFAM" id="SSF54999">
    <property type="entry name" value="Ribosomal protein S10"/>
    <property type="match status" value="1"/>
</dbReference>
<dbReference type="PROSITE" id="PS00361">
    <property type="entry name" value="RIBOSOMAL_S10"/>
    <property type="match status" value="1"/>
</dbReference>
<sequence>MDRQNIRIRLKAFDHRVLDHSTREIVNTAKRTGATVRGPIPLPTRIEKFTVNRSPHIDKKSREQFEIRTHKRVLDIVDPTPQTVDALMKLDLSAGVDVEIKL</sequence>
<protein>
    <recommendedName>
        <fullName evidence="1">Small ribosomal subunit protein uS10</fullName>
    </recommendedName>
    <alternativeName>
        <fullName evidence="2">30S ribosomal protein S10</fullName>
    </alternativeName>
</protein>
<comment type="function">
    <text evidence="1">Involved in the binding of tRNA to the ribosomes.</text>
</comment>
<comment type="subunit">
    <text evidence="1">Part of the 30S ribosomal subunit.</text>
</comment>
<comment type="similarity">
    <text evidence="1">Belongs to the universal ribosomal protein uS10 family.</text>
</comment>
<organism>
    <name type="scientific">Phenylobacterium zucineum (strain HLK1)</name>
    <dbReference type="NCBI Taxonomy" id="450851"/>
    <lineage>
        <taxon>Bacteria</taxon>
        <taxon>Pseudomonadati</taxon>
        <taxon>Pseudomonadota</taxon>
        <taxon>Alphaproteobacteria</taxon>
        <taxon>Caulobacterales</taxon>
        <taxon>Caulobacteraceae</taxon>
        <taxon>Phenylobacterium</taxon>
    </lineage>
</organism>
<keyword id="KW-1185">Reference proteome</keyword>
<keyword id="KW-0687">Ribonucleoprotein</keyword>
<keyword id="KW-0689">Ribosomal protein</keyword>
<name>RS10_PHEZH</name>
<feature type="chain" id="PRO_1000127161" description="Small ribosomal subunit protein uS10">
    <location>
        <begin position="1"/>
        <end position="102"/>
    </location>
</feature>